<dbReference type="EC" id="3.1.-.-" evidence="1"/>
<dbReference type="EMBL" id="BA000016">
    <property type="protein sequence ID" value="BAB81484.1"/>
    <property type="molecule type" value="Genomic_DNA"/>
</dbReference>
<dbReference type="SMR" id="Q8XJH8"/>
<dbReference type="STRING" id="195102.gene:10491042"/>
<dbReference type="KEGG" id="cpe:CPE1778"/>
<dbReference type="HOGENOM" id="CLU_098240_2_0_9"/>
<dbReference type="Proteomes" id="UP000000818">
    <property type="component" value="Chromosome"/>
</dbReference>
<dbReference type="GO" id="GO:0005829">
    <property type="term" value="C:cytosol"/>
    <property type="evidence" value="ECO:0007669"/>
    <property type="project" value="TreeGrafter"/>
</dbReference>
<dbReference type="GO" id="GO:0004518">
    <property type="term" value="F:nuclease activity"/>
    <property type="evidence" value="ECO:0007669"/>
    <property type="project" value="UniProtKB-KW"/>
</dbReference>
<dbReference type="GO" id="GO:0000967">
    <property type="term" value="P:rRNA 5'-end processing"/>
    <property type="evidence" value="ECO:0007669"/>
    <property type="project" value="UniProtKB-UniRule"/>
</dbReference>
<dbReference type="CDD" id="cd16964">
    <property type="entry name" value="YqgF"/>
    <property type="match status" value="1"/>
</dbReference>
<dbReference type="Gene3D" id="3.30.420.140">
    <property type="entry name" value="YqgF/RNase H-like domain"/>
    <property type="match status" value="1"/>
</dbReference>
<dbReference type="HAMAP" id="MF_00651">
    <property type="entry name" value="Nuclease_YqgF"/>
    <property type="match status" value="1"/>
</dbReference>
<dbReference type="InterPro" id="IPR012337">
    <property type="entry name" value="RNaseH-like_sf"/>
</dbReference>
<dbReference type="InterPro" id="IPR005227">
    <property type="entry name" value="YqgF"/>
</dbReference>
<dbReference type="InterPro" id="IPR006641">
    <property type="entry name" value="YqgF/RNaseH-like_dom"/>
</dbReference>
<dbReference type="InterPro" id="IPR037027">
    <property type="entry name" value="YqgF/RNaseH-like_dom_sf"/>
</dbReference>
<dbReference type="NCBIfam" id="TIGR00250">
    <property type="entry name" value="RNAse_H_YqgF"/>
    <property type="match status" value="1"/>
</dbReference>
<dbReference type="PANTHER" id="PTHR33317">
    <property type="entry name" value="POLYNUCLEOTIDYL TRANSFERASE, RIBONUCLEASE H-LIKE SUPERFAMILY PROTEIN"/>
    <property type="match status" value="1"/>
</dbReference>
<dbReference type="PANTHER" id="PTHR33317:SF4">
    <property type="entry name" value="POLYNUCLEOTIDYL TRANSFERASE, RIBONUCLEASE H-LIKE SUPERFAMILY PROTEIN"/>
    <property type="match status" value="1"/>
</dbReference>
<dbReference type="Pfam" id="PF03652">
    <property type="entry name" value="RuvX"/>
    <property type="match status" value="1"/>
</dbReference>
<dbReference type="SMART" id="SM00732">
    <property type="entry name" value="YqgFc"/>
    <property type="match status" value="1"/>
</dbReference>
<dbReference type="SUPFAM" id="SSF53098">
    <property type="entry name" value="Ribonuclease H-like"/>
    <property type="match status" value="1"/>
</dbReference>
<gene>
    <name type="ordered locus">CPE1778</name>
</gene>
<keyword id="KW-0963">Cytoplasm</keyword>
<keyword id="KW-0378">Hydrolase</keyword>
<keyword id="KW-0540">Nuclease</keyword>
<keyword id="KW-1185">Reference proteome</keyword>
<keyword id="KW-0690">Ribosome biogenesis</keyword>
<evidence type="ECO:0000255" key="1">
    <source>
        <dbReference type="HAMAP-Rule" id="MF_00651"/>
    </source>
</evidence>
<comment type="function">
    <text evidence="1">Could be a nuclease involved in processing of the 5'-end of pre-16S rRNA.</text>
</comment>
<comment type="subcellular location">
    <subcellularLocation>
        <location evidence="1">Cytoplasm</location>
    </subcellularLocation>
</comment>
<comment type="similarity">
    <text evidence="1">Belongs to the YqgF nuclease family.</text>
</comment>
<feature type="chain" id="PRO_0000172050" description="Putative pre-16S rRNA nuclease">
    <location>
        <begin position="1"/>
        <end position="137"/>
    </location>
</feature>
<sequence length="137" mass="15156">MRILGLDIGSKTIGVAVSDPLGWTAQGVTTIKRDCYTKDVEAVMKICKEYGVETIVAGMPKNMNGTIGPSGEMVKNLCEQIEKSFDGKIEFWDERLTTVAAHRAMLEADLSRAKRKKIVDKIAATYILQGYLDRISK</sequence>
<reference key="1">
    <citation type="journal article" date="2002" name="Proc. Natl. Acad. Sci. U.S.A.">
        <title>Complete genome sequence of Clostridium perfringens, an anaerobic flesh-eater.</title>
        <authorList>
            <person name="Shimizu T."/>
            <person name="Ohtani K."/>
            <person name="Hirakawa H."/>
            <person name="Ohshima K."/>
            <person name="Yamashita A."/>
            <person name="Shiba T."/>
            <person name="Ogasawara N."/>
            <person name="Hattori M."/>
            <person name="Kuhara S."/>
            <person name="Hayashi H."/>
        </authorList>
    </citation>
    <scope>NUCLEOTIDE SEQUENCE [LARGE SCALE GENOMIC DNA]</scope>
    <source>
        <strain>13 / Type A</strain>
    </source>
</reference>
<organism>
    <name type="scientific">Clostridium perfringens (strain 13 / Type A)</name>
    <dbReference type="NCBI Taxonomy" id="195102"/>
    <lineage>
        <taxon>Bacteria</taxon>
        <taxon>Bacillati</taxon>
        <taxon>Bacillota</taxon>
        <taxon>Clostridia</taxon>
        <taxon>Eubacteriales</taxon>
        <taxon>Clostridiaceae</taxon>
        <taxon>Clostridium</taxon>
    </lineage>
</organism>
<proteinExistence type="inferred from homology"/>
<accession>Q8XJH8</accession>
<protein>
    <recommendedName>
        <fullName evidence="1">Putative pre-16S rRNA nuclease</fullName>
        <ecNumber evidence="1">3.1.-.-</ecNumber>
    </recommendedName>
</protein>
<name>YQGF_CLOPE</name>